<keyword id="KW-0975">Bacterial flagellum</keyword>
<keyword id="KW-0574">Periplasm</keyword>
<keyword id="KW-0732">Signal</keyword>
<feature type="signal peptide" evidence="1">
    <location>
        <begin position="1"/>
        <end position="21"/>
    </location>
</feature>
<feature type="chain" id="PRO_1000134842" description="Flagellar P-ring protein">
    <location>
        <begin position="22"/>
        <end position="367"/>
    </location>
</feature>
<comment type="function">
    <text evidence="1">Assembles around the rod to form the L-ring and probably protects the motor/basal body from shearing forces during rotation.</text>
</comment>
<comment type="subunit">
    <text evidence="1">The basal body constitutes a major portion of the flagellar organelle and consists of four rings (L,P,S, and M) mounted on a central rod.</text>
</comment>
<comment type="subcellular location">
    <subcellularLocation>
        <location evidence="1">Periplasm</location>
    </subcellularLocation>
    <subcellularLocation>
        <location evidence="1">Bacterial flagellum basal body</location>
    </subcellularLocation>
</comment>
<comment type="similarity">
    <text evidence="1">Belongs to the FlgI family.</text>
</comment>
<name>FLGI_SALPC</name>
<reference key="1">
    <citation type="journal article" date="2009" name="PLoS ONE">
        <title>Salmonella paratyphi C: genetic divergence from Salmonella choleraesuis and pathogenic convergence with Salmonella typhi.</title>
        <authorList>
            <person name="Liu W.-Q."/>
            <person name="Feng Y."/>
            <person name="Wang Y."/>
            <person name="Zou Q.-H."/>
            <person name="Chen F."/>
            <person name="Guo J.-T."/>
            <person name="Peng Y.-H."/>
            <person name="Jin Y."/>
            <person name="Li Y.-G."/>
            <person name="Hu S.-N."/>
            <person name="Johnston R.N."/>
            <person name="Liu G.-R."/>
            <person name="Liu S.-L."/>
        </authorList>
    </citation>
    <scope>NUCLEOTIDE SEQUENCE [LARGE SCALE GENOMIC DNA]</scope>
    <source>
        <strain>RKS4594</strain>
    </source>
</reference>
<gene>
    <name evidence="1" type="primary">flgI</name>
    <name type="ordered locus">SPC_2568</name>
</gene>
<dbReference type="EMBL" id="CP000857">
    <property type="protein sequence ID" value="ACN46672.1"/>
    <property type="molecule type" value="Genomic_DNA"/>
</dbReference>
<dbReference type="SMR" id="C0Q827"/>
<dbReference type="KEGG" id="sei:SPC_2568"/>
<dbReference type="HOGENOM" id="CLU_045235_1_0_6"/>
<dbReference type="Proteomes" id="UP000001599">
    <property type="component" value="Chromosome"/>
</dbReference>
<dbReference type="GO" id="GO:0009428">
    <property type="term" value="C:bacterial-type flagellum basal body, distal rod, P ring"/>
    <property type="evidence" value="ECO:0007669"/>
    <property type="project" value="InterPro"/>
</dbReference>
<dbReference type="GO" id="GO:0030288">
    <property type="term" value="C:outer membrane-bounded periplasmic space"/>
    <property type="evidence" value="ECO:0007669"/>
    <property type="project" value="InterPro"/>
</dbReference>
<dbReference type="GO" id="GO:0005198">
    <property type="term" value="F:structural molecule activity"/>
    <property type="evidence" value="ECO:0007669"/>
    <property type="project" value="InterPro"/>
</dbReference>
<dbReference type="GO" id="GO:0071973">
    <property type="term" value="P:bacterial-type flagellum-dependent cell motility"/>
    <property type="evidence" value="ECO:0007669"/>
    <property type="project" value="InterPro"/>
</dbReference>
<dbReference type="HAMAP" id="MF_00416">
    <property type="entry name" value="FlgI"/>
    <property type="match status" value="1"/>
</dbReference>
<dbReference type="InterPro" id="IPR001782">
    <property type="entry name" value="Flag_FlgI"/>
</dbReference>
<dbReference type="NCBIfam" id="NF003676">
    <property type="entry name" value="PRK05303.1"/>
    <property type="match status" value="1"/>
</dbReference>
<dbReference type="PANTHER" id="PTHR30381">
    <property type="entry name" value="FLAGELLAR P-RING PERIPLASMIC PROTEIN FLGI"/>
    <property type="match status" value="1"/>
</dbReference>
<dbReference type="PANTHER" id="PTHR30381:SF0">
    <property type="entry name" value="FLAGELLAR P-RING PROTEIN"/>
    <property type="match status" value="1"/>
</dbReference>
<dbReference type="Pfam" id="PF02119">
    <property type="entry name" value="FlgI"/>
    <property type="match status" value="1"/>
</dbReference>
<dbReference type="PRINTS" id="PR01010">
    <property type="entry name" value="FLGPRINGFLGI"/>
</dbReference>
<protein>
    <recommendedName>
        <fullName evidence="1">Flagellar P-ring protein</fullName>
    </recommendedName>
    <alternativeName>
        <fullName evidence="1">Basal body P-ring protein</fullName>
    </alternativeName>
</protein>
<accession>C0Q827</accession>
<organism>
    <name type="scientific">Salmonella paratyphi C (strain RKS4594)</name>
    <dbReference type="NCBI Taxonomy" id="476213"/>
    <lineage>
        <taxon>Bacteria</taxon>
        <taxon>Pseudomonadati</taxon>
        <taxon>Pseudomonadota</taxon>
        <taxon>Gammaproteobacteria</taxon>
        <taxon>Enterobacterales</taxon>
        <taxon>Enterobacteriaceae</taxon>
        <taxon>Salmonella</taxon>
    </lineage>
</organism>
<evidence type="ECO:0000255" key="1">
    <source>
        <dbReference type="HAMAP-Rule" id="MF_00416"/>
    </source>
</evidence>
<sequence length="367" mass="38431">MYVFKALAGIVLALVATLAHAERIRDLTSVQGVRENSLIGYGLVVGLDGTGDQTTQTPFTTQTLNNMLSQLGITVPTGTNMQLKNVAAVMVTASYPPFARQGQTIDVVVSSMGNAKSLRGGTLLMTPLKGVDSQVYALAQGNILVGGAGASAGGSSVQVNQLNGGRITNGAIIERELPTQFGAGNTINLQLNDEDFTMAQQITDAINRARGYGSATALDARTVQVRVPSGNSSQVRFLADIQNMEVNVTPQDAKVVINSRTGSVVMNREVTLDSCAVAQGNLSVTVNRQLNVNQPNTPFGGGQTVVTPQTQIDLRQSGGSLQSVRSSANLNSVVRALNALGATPMDLMSILQSMQSAGCLRAKLEII</sequence>
<proteinExistence type="inferred from homology"/>